<reference key="1">
    <citation type="journal article" date="1990" name="Nucleic Acids Res.">
        <title>Nucleotide and deduced amino acid sequences of the nominal nonstructural phosphoprotein of the ERA, PM and CVS-11 strains of rabies virus.</title>
        <authorList>
            <person name="Larson J.K."/>
            <person name="Wunner W.H."/>
        </authorList>
    </citation>
    <scope>NUCLEOTIDE SEQUENCE [GENOMIC RNA]</scope>
</reference>
<reference key="2">
    <citation type="submission" date="2007-01" db="EMBL/GenBank/DDBJ databases">
        <title>Complete nucleotide sequencing of SAD derivatives of attenuated rabies virus vaccine strains.</title>
        <authorList>
            <person name="Geue L."/>
            <person name="Schares S."/>
            <person name="Schnick C."/>
            <person name="Kliemt J."/>
            <person name="Beckert A."/>
            <person name="Hoffmann B."/>
            <person name="Freuling C."/>
            <person name="Marston D."/>
            <person name="McElhinney L."/>
            <person name="Fooks A."/>
            <person name="Zanoni R."/>
            <person name="Peterhans E."/>
            <person name="Cox J."/>
            <person name="Mueller T."/>
        </authorList>
    </citation>
    <scope>NUCLEOTIDE SEQUENCE [GENOMIC RNA]</scope>
</reference>
<reference key="3">
    <citation type="journal article" date="1994" name="Virology">
        <title>Both the N- and the C-terminal domains of the nominal phosphoprotein of rabies virus are involved in binding to the nucleoprotein.</title>
        <authorList>
            <person name="Fu Z.F."/>
            <person name="Zheng Y."/>
            <person name="Wunner W.H."/>
            <person name="Koprowski H."/>
            <person name="Dietzschold B."/>
        </authorList>
    </citation>
    <scope>INTERACTION WITH NUCLEOPROTEIN</scope>
</reference>
<accession>P69479</accession>
<accession>A3F5L6</accession>
<accession>P22559</accession>
<organism>
    <name type="scientific">Rabies virus (strain ERA)</name>
    <name type="common">RABV</name>
    <dbReference type="NCBI Taxonomy" id="11295"/>
    <lineage>
        <taxon>Viruses</taxon>
        <taxon>Riboviria</taxon>
        <taxon>Orthornavirae</taxon>
        <taxon>Negarnaviricota</taxon>
        <taxon>Haploviricotina</taxon>
        <taxon>Monjiviricetes</taxon>
        <taxon>Mononegavirales</taxon>
        <taxon>Rhabdoviridae</taxon>
        <taxon>Alpharhabdovirinae</taxon>
        <taxon>Lyssavirus</taxon>
        <taxon>Lyssavirus rabies</taxon>
    </lineage>
</organism>
<dbReference type="EMBL" id="X55728">
    <property type="protein sequence ID" value="CAA39259.1"/>
    <property type="molecule type" value="Genomic_RNA"/>
</dbReference>
<dbReference type="EMBL" id="EF206707">
    <property type="protein sequence ID" value="ABN11292.1"/>
    <property type="molecule type" value="Viral_cRNA"/>
</dbReference>
<dbReference type="PIR" id="S13708">
    <property type="entry name" value="S13708"/>
</dbReference>
<dbReference type="SMR" id="P69479"/>
<dbReference type="IntAct" id="P69479">
    <property type="interactions" value="1420"/>
</dbReference>
<dbReference type="Proteomes" id="UP000008619">
    <property type="component" value="Genome"/>
</dbReference>
<dbReference type="GO" id="GO:0043657">
    <property type="term" value="C:host cell"/>
    <property type="evidence" value="ECO:0007669"/>
    <property type="project" value="GOC"/>
</dbReference>
<dbReference type="GO" id="GO:0030430">
    <property type="term" value="C:host cell cytoplasm"/>
    <property type="evidence" value="ECO:0007669"/>
    <property type="project" value="UniProtKB-SubCell"/>
</dbReference>
<dbReference type="GO" id="GO:0042025">
    <property type="term" value="C:host cell nucleus"/>
    <property type="evidence" value="ECO:0007669"/>
    <property type="project" value="UniProtKB-SubCell"/>
</dbReference>
<dbReference type="GO" id="GO:0044423">
    <property type="term" value="C:virion component"/>
    <property type="evidence" value="ECO:0007669"/>
    <property type="project" value="UniProtKB-KW"/>
</dbReference>
<dbReference type="GO" id="GO:0003968">
    <property type="term" value="F:RNA-directed RNA polymerase activity"/>
    <property type="evidence" value="ECO:0007669"/>
    <property type="project" value="InterPro"/>
</dbReference>
<dbReference type="GO" id="GO:0075521">
    <property type="term" value="P:microtubule-dependent intracellular transport of viral material towards nucleus"/>
    <property type="evidence" value="ECO:0007669"/>
    <property type="project" value="UniProtKB-KW"/>
</dbReference>
<dbReference type="GO" id="GO:0046718">
    <property type="term" value="P:symbiont entry into host cell"/>
    <property type="evidence" value="ECO:0007669"/>
    <property type="project" value="UniProtKB-KW"/>
</dbReference>
<dbReference type="GO" id="GO:0039723">
    <property type="term" value="P:symbiont-mediated suppression of host cytoplasmic pattern recognition receptor signaling pathway via inhibition of TBK1 activity"/>
    <property type="evidence" value="ECO:0007669"/>
    <property type="project" value="UniProtKB-KW"/>
</dbReference>
<dbReference type="GO" id="GO:0039563">
    <property type="term" value="P:symbiont-mediated suppression of host JAK-STAT cascade via inhibition of STAT1 activity"/>
    <property type="evidence" value="ECO:0007669"/>
    <property type="project" value="UniProtKB-KW"/>
</dbReference>
<dbReference type="GO" id="GO:0039564">
    <property type="term" value="P:symbiont-mediated suppression of host JAK-STAT cascade via inhibition of STAT2 activity"/>
    <property type="evidence" value="ECO:0007669"/>
    <property type="project" value="UniProtKB-KW"/>
</dbReference>
<dbReference type="GO" id="GO:0039722">
    <property type="term" value="P:symbiont-mediated suppression of host toll-like receptor signaling pathway"/>
    <property type="evidence" value="ECO:0007669"/>
    <property type="project" value="UniProtKB-KW"/>
</dbReference>
<dbReference type="GO" id="GO:0039502">
    <property type="term" value="P:symbiont-mediated suppression of host type I interferon-mediated signaling pathway"/>
    <property type="evidence" value="ECO:0007669"/>
    <property type="project" value="UniProtKB-KW"/>
</dbReference>
<dbReference type="GO" id="GO:0019083">
    <property type="term" value="P:viral transcription"/>
    <property type="evidence" value="ECO:0007669"/>
    <property type="project" value="InterPro"/>
</dbReference>
<dbReference type="CDD" id="cd21032">
    <property type="entry name" value="RABV_P-protein-C_like"/>
    <property type="match status" value="1"/>
</dbReference>
<dbReference type="FunFam" id="1.20.120.820:FF:000001">
    <property type="entry name" value="Phosphoprotein"/>
    <property type="match status" value="1"/>
</dbReference>
<dbReference type="Gene3D" id="6.10.140.1560">
    <property type="match status" value="1"/>
</dbReference>
<dbReference type="Gene3D" id="1.20.120.820">
    <property type="entry name" value="Phosphoprotein, C-terminal domain"/>
    <property type="match status" value="1"/>
</dbReference>
<dbReference type="InterPro" id="IPR004259">
    <property type="entry name" value="PP_M1-like"/>
</dbReference>
<dbReference type="InterPro" id="IPR037199">
    <property type="entry name" value="PP_M1_C"/>
</dbReference>
<dbReference type="InterPro" id="IPR049506">
    <property type="entry name" value="RABV_P-like_C"/>
</dbReference>
<dbReference type="Pfam" id="PF03012">
    <property type="entry name" value="PP_M1"/>
    <property type="match status" value="1"/>
</dbReference>
<dbReference type="SUPFAM" id="SSF118173">
    <property type="entry name" value="Phosphoprotein M1, C-terminal domain"/>
    <property type="match status" value="1"/>
</dbReference>
<protein>
    <recommendedName>
        <fullName>Phosphoprotein</fullName>
        <shortName>Protein P</shortName>
    </recommendedName>
    <alternativeName>
        <fullName>Protein M1</fullName>
    </alternativeName>
</protein>
<evidence type="ECO:0000250" key="1"/>
<evidence type="ECO:0000250" key="2">
    <source>
        <dbReference type="UniProtKB" id="P16286"/>
    </source>
</evidence>
<evidence type="ECO:0000256" key="3">
    <source>
        <dbReference type="SAM" id="MobiDB-lite"/>
    </source>
</evidence>
<evidence type="ECO:0000305" key="4"/>
<gene>
    <name type="primary">P</name>
</gene>
<comment type="function">
    <text evidence="1 2">Non catalytic polymerase cofactor and regulatory protein that plays a role in viral transcription and replication. Stabilizes the RNA polymerase L to the N-RNA template and binds the soluble protein N, preventing it from encapsidating non-genomic RNA. Also inhibits host IFN-alpha and IFN-beta signaling by binding and retaining phosphorylated STAT1 in the cytoplasm or by inhibiting the DNA binding of STAT1 in the nucleus. Might be involved, through interaction with host dynein, in intracellular microtubule-dependent virus transport of incoming virus from the synapse toward the cell body (By similarity). Inhibits interferon induction pathways by interacting with host TBK1 and preventing the formation of dynamic cytoplasmic condensates that have liquid properties and that are essential for interferon production (By similarity).</text>
</comment>
<comment type="subunit">
    <molecule>Phosphoprotein</molecule>
    <text evidence="2">Homotrimer when phosphorylated. This trimer is stabilized by binding to the L protein. Binds soluble protein N, and ribonucleocapsid. Interacts with host DYNLL1 and DYNLL2; this interaction may play a role in intracellular microtubule-dependent virus transport of incoming virus. Interacts with host STAT1, STAT2 and PML. Interacts with host TBK1.</text>
</comment>
<comment type="subunit">
    <molecule>Isoform P3</molecule>
    <text evidence="1">Binds host PML.</text>
</comment>
<comment type="interaction">
    <interactant intactId="EBI-25568013">
        <id>P69479</id>
    </interactant>
    <interactant intactId="EBI-2510446">
        <id>P61221</id>
        <label>ABCE1</label>
    </interactant>
    <organismsDiffer>true</organismsDiffer>
    <experiments>3</experiments>
</comment>
<comment type="subcellular location">
    <molecule>Phosphoprotein</molecule>
    <subcellularLocation>
        <location>Virion</location>
    </subcellularLocation>
    <subcellularLocation>
        <location evidence="1">Host cytoplasm</location>
    </subcellularLocation>
</comment>
<comment type="subcellular location">
    <molecule>Isoform P2</molecule>
    <subcellularLocation>
        <location evidence="1">Host cytoplasm</location>
    </subcellularLocation>
</comment>
<comment type="subcellular location">
    <molecule>Isoform P3</molecule>
    <subcellularLocation>
        <location evidence="1">Host nucleus</location>
    </subcellularLocation>
</comment>
<comment type="subcellular location">
    <molecule>Isoform P4</molecule>
    <subcellularLocation>
        <location evidence="1">Host nucleus</location>
    </subcellularLocation>
</comment>
<comment type="subcellular location">
    <molecule>Isoform P5</molecule>
    <subcellularLocation>
        <location evidence="1">Host nucleus</location>
    </subcellularLocation>
</comment>
<comment type="alternative products">
    <event type="alternative initiation"/>
    <isoform>
        <id>P69479-1</id>
        <name>P</name>
        <sequence type="displayed"/>
    </isoform>
    <isoform>
        <id>P69479-2</id>
        <name>P2</name>
        <sequence type="described" ref="VSP_026871"/>
    </isoform>
    <isoform>
        <id>P69479-3</id>
        <name>P3</name>
        <sequence type="described" ref="VSP_026870"/>
    </isoform>
    <isoform>
        <id>P69479-4</id>
        <name>P4</name>
        <sequence type="described" ref="VSP_026869"/>
    </isoform>
    <isoform>
        <id>P69479-5</id>
        <name>P5</name>
        <sequence type="described" ref="VSP_026868"/>
    </isoform>
</comment>
<comment type="PTM">
    <text evidence="1">Phosphorylated by host PKC and by an unknown kinase.</text>
</comment>
<comment type="similarity">
    <text evidence="4">Belongs to the lyssavirus protein P family.</text>
</comment>
<keyword id="KW-0024">Alternative initiation</keyword>
<keyword id="KW-0143">Chaperone</keyword>
<keyword id="KW-1176">Cytoplasmic inwards viral transport</keyword>
<keyword id="KW-1035">Host cytoplasm</keyword>
<keyword id="KW-1048">Host nucleus</keyword>
<keyword id="KW-0945">Host-virus interaction</keyword>
<keyword id="KW-1090">Inhibition of host innate immune response by virus</keyword>
<keyword id="KW-1114">Inhibition of host interferon signaling pathway by virus</keyword>
<keyword id="KW-1105">Inhibition of host STAT1 by virus</keyword>
<keyword id="KW-1106">Inhibition of host STAT2 by virus</keyword>
<keyword id="KW-1223">Inhibition of host TBK1 by virus</keyword>
<keyword id="KW-1225">Inhibition of host TLR pathway by virus</keyword>
<keyword id="KW-0922">Interferon antiviral system evasion</keyword>
<keyword id="KW-1177">Microtubular inwards viral transport</keyword>
<keyword id="KW-0597">Phosphoprotein</keyword>
<keyword id="KW-0899">Viral immunoevasion</keyword>
<keyword id="KW-0693">Viral RNA replication</keyword>
<keyword id="KW-0946">Virion</keyword>
<keyword id="KW-1160">Virus entry into host cell</keyword>
<feature type="chain" id="PRO_0000222829" description="Phosphoprotein">
    <location>
        <begin position="1"/>
        <end position="297"/>
    </location>
</feature>
<feature type="region of interest" description="Disordered" evidence="3">
    <location>
        <begin position="132"/>
        <end position="189"/>
    </location>
</feature>
<feature type="region of interest" description="DYNLL1 and DYNLL2 binding" evidence="1">
    <location>
        <begin position="138"/>
        <end position="172"/>
    </location>
</feature>
<feature type="short sequence motif" description="Nuclear export signal" evidence="1">
    <location>
        <begin position="49"/>
        <end position="58"/>
    </location>
</feature>
<feature type="short sequence motif" description="Nuclear localization signal" evidence="1">
    <location>
        <begin position="211"/>
        <end position="214"/>
    </location>
</feature>
<feature type="compositionally biased region" description="Basic and acidic residues" evidence="3">
    <location>
        <begin position="140"/>
        <end position="157"/>
    </location>
</feature>
<feature type="compositionally biased region" description="Polar residues" evidence="3">
    <location>
        <begin position="158"/>
        <end position="170"/>
    </location>
</feature>
<feature type="modified residue" description="Phosphoserine; by host" evidence="1">
    <location>
        <position position="63"/>
    </location>
</feature>
<feature type="modified residue" description="Phosphoserine; by host PKC" evidence="1">
    <location>
        <position position="162"/>
    </location>
</feature>
<feature type="modified residue" description="Phosphoserine; by host PKC" evidence="1">
    <location>
        <position position="210"/>
    </location>
</feature>
<feature type="modified residue" description="Phosphoserine; by host PKC" evidence="1">
    <location>
        <position position="271"/>
    </location>
</feature>
<feature type="splice variant" id="VSP_026868" description="In isoform P5." evidence="4">
    <location>
        <begin position="1"/>
        <end position="82"/>
    </location>
</feature>
<feature type="splice variant" id="VSP_026869" description="In isoform P4." evidence="4">
    <location>
        <begin position="1"/>
        <end position="68"/>
    </location>
</feature>
<feature type="splice variant" id="VSP_026870" description="In isoform P3." evidence="4">
    <location>
        <begin position="1"/>
        <end position="52"/>
    </location>
</feature>
<feature type="splice variant" id="VSP_026871" description="In isoform P2." evidence="4">
    <location>
        <begin position="1"/>
        <end position="19"/>
    </location>
</feature>
<proteinExistence type="evidence at protein level"/>
<name>PHOSP_RABVE</name>
<organismHost>
    <name type="scientific">Homo sapiens</name>
    <name type="common">Human</name>
    <dbReference type="NCBI Taxonomy" id="9606"/>
</organismHost>
<organismHost>
    <name type="scientific">Mammalia</name>
    <dbReference type="NCBI Taxonomy" id="40674"/>
</organismHost>
<sequence length="297" mass="33213">MSKIFVNPSAIRAGLADLEMAEETVDLINRNIEDNQAHLQGEPIEVDNLPEDMGRLHLDDGKSPNPGEMAKVGEGKYREDFQMDEGEDPSFLFQSYLENVGVQIVRQMRSGERFLKIWSQTVEEIISYVAVNFPNPPGKSSEDKSTQTTGRELKKETTPTPSQRESQSSKARMAAQTASGPPALEWSATNEKDDLSVEAEIAHQIAESFSKKYKFPSRSSGILLYNFEQLKMNLDDIVKEAKNVPGVTRLAHDGSKLPLRCVLGWVALANSKKFQLLVESDKLSKIMQDDLNRYTSC</sequence>